<gene>
    <name type="primary">Htr1b</name>
    <name type="synonym">5ht1b</name>
</gene>
<sequence length="386" mass="43079">MEEQGIQCAPPPPAASQTGVPLTNLSHNCSADGYIYQDSIALPWKVLLVALLALITLATTLSNAFVIATVYRTRKLHTPANYLIASLAVTDLLVSILVMPISTMYTVTGRWTLGQVVCDFWLSSDITCCTASIMHLCVIALDRYWAITDAVEYSAKRTPKRAAIMIVLVWVFSISISLPPFFWRQAKAEEEMLDCFVNTDHVLYTVYSTVGAFYLPTLLLIALYGRIYVEARSRILKQTPNKTGKRLTRAQLITDSPGSTSSVTSINSRAPDVPSESGSPVYVNQVKVRVSDALLEKKKLMAARERKATKTLGIILGAFIVCWLPFFIISLVMPICKDACWFHMAIFDFFNWLGYLNSLINPIIYTMSNEDFKQAFHKLIRFKCAG</sequence>
<dbReference type="EMBL" id="Z11597">
    <property type="protein sequence ID" value="CAA77678.1"/>
    <property type="molecule type" value="Genomic_DNA"/>
</dbReference>
<dbReference type="EMBL" id="M85151">
    <property type="protein sequence ID" value="AAA83221.1"/>
    <property type="molecule type" value="Genomic_DNA"/>
</dbReference>
<dbReference type="CCDS" id="CCDS23370.1"/>
<dbReference type="PIR" id="A42688">
    <property type="entry name" value="A42688"/>
</dbReference>
<dbReference type="RefSeq" id="NP_001397166.1">
    <property type="nucleotide sequence ID" value="NM_001410237.1"/>
</dbReference>
<dbReference type="RefSeq" id="NP_034612.1">
    <property type="nucleotide sequence ID" value="NM_010482.2"/>
</dbReference>
<dbReference type="SMR" id="P28334"/>
<dbReference type="CORUM" id="P28334"/>
<dbReference type="FunCoup" id="P28334">
    <property type="interactions" value="804"/>
</dbReference>
<dbReference type="STRING" id="10090.ENSMUSP00000139389"/>
<dbReference type="BindingDB" id="P28334"/>
<dbReference type="ChEMBL" id="CHEMBL3708691"/>
<dbReference type="DrugCentral" id="P28334"/>
<dbReference type="GuidetoPHARMACOLOGY" id="2"/>
<dbReference type="GlyCosmos" id="P28334">
    <property type="glycosylation" value="2 sites, No reported glycans"/>
</dbReference>
<dbReference type="GlyGen" id="P28334">
    <property type="glycosylation" value="2 sites"/>
</dbReference>
<dbReference type="iPTMnet" id="P28334"/>
<dbReference type="PhosphoSitePlus" id="P28334"/>
<dbReference type="PaxDb" id="10090-ENSMUSP00000139389"/>
<dbReference type="ProteomicsDB" id="285572"/>
<dbReference type="Antibodypedia" id="18374">
    <property type="antibodies" value="309 antibodies from 37 providers"/>
</dbReference>
<dbReference type="DNASU" id="15551"/>
<dbReference type="Ensembl" id="ENSMUST00000051005.5">
    <property type="protein sequence ID" value="ENSMUSP00000050898.5"/>
    <property type="gene ID" value="ENSMUSG00000049511.6"/>
</dbReference>
<dbReference type="Ensembl" id="ENSMUST00000183482.2">
    <property type="protein sequence ID" value="ENSMUSP00000139389.2"/>
    <property type="gene ID" value="ENSMUSG00000049511.6"/>
</dbReference>
<dbReference type="GeneID" id="15551"/>
<dbReference type="KEGG" id="mmu:15551"/>
<dbReference type="UCSC" id="uc009qvl.1">
    <property type="organism name" value="mouse"/>
</dbReference>
<dbReference type="AGR" id="MGI:96274"/>
<dbReference type="CTD" id="3351"/>
<dbReference type="MGI" id="MGI:96274">
    <property type="gene designation" value="Htr1b"/>
</dbReference>
<dbReference type="VEuPathDB" id="HostDB:ENSMUSG00000049511"/>
<dbReference type="eggNOG" id="KOG3656">
    <property type="taxonomic scope" value="Eukaryota"/>
</dbReference>
<dbReference type="GeneTree" id="ENSGT01010000222287"/>
<dbReference type="HOGENOM" id="CLU_009579_11_1_1"/>
<dbReference type="InParanoid" id="P28334"/>
<dbReference type="OMA" id="RFRCCRA"/>
<dbReference type="OrthoDB" id="5956310at2759"/>
<dbReference type="PhylomeDB" id="P28334"/>
<dbReference type="TreeFam" id="TF316350"/>
<dbReference type="Reactome" id="R-MMU-390666">
    <property type="pathway name" value="Serotonin receptors"/>
</dbReference>
<dbReference type="Reactome" id="R-MMU-418594">
    <property type="pathway name" value="G alpha (i) signalling events"/>
</dbReference>
<dbReference type="BioGRID-ORCS" id="15551">
    <property type="hits" value="2 hits in 78 CRISPR screens"/>
</dbReference>
<dbReference type="PRO" id="PR:P28334"/>
<dbReference type="Proteomes" id="UP000000589">
    <property type="component" value="Chromosome 9"/>
</dbReference>
<dbReference type="RNAct" id="P28334">
    <property type="molecule type" value="protein"/>
</dbReference>
<dbReference type="Bgee" id="ENSMUSG00000049511">
    <property type="expression patterns" value="Expressed in caudate-putamen and 145 other cell types or tissues"/>
</dbReference>
<dbReference type="ExpressionAtlas" id="P28334">
    <property type="expression patterns" value="baseline and differential"/>
</dbReference>
<dbReference type="GO" id="GO:0005737">
    <property type="term" value="C:cytoplasm"/>
    <property type="evidence" value="ECO:0000314"/>
    <property type="project" value="UniProtKB"/>
</dbReference>
<dbReference type="GO" id="GO:0005783">
    <property type="term" value="C:endoplasmic reticulum"/>
    <property type="evidence" value="ECO:0007669"/>
    <property type="project" value="Ensembl"/>
</dbReference>
<dbReference type="GO" id="GO:0098666">
    <property type="term" value="C:G protein-coupled serotonin receptor complex"/>
    <property type="evidence" value="ECO:0000314"/>
    <property type="project" value="UniProtKB"/>
</dbReference>
<dbReference type="GO" id="GO:0005886">
    <property type="term" value="C:plasma membrane"/>
    <property type="evidence" value="ECO:0000314"/>
    <property type="project" value="UniProtKB"/>
</dbReference>
<dbReference type="GO" id="GO:0042734">
    <property type="term" value="C:presynaptic membrane"/>
    <property type="evidence" value="ECO:0000314"/>
    <property type="project" value="SynGO"/>
</dbReference>
<dbReference type="GO" id="GO:0099154">
    <property type="term" value="C:serotonergic synapse"/>
    <property type="evidence" value="ECO:0000314"/>
    <property type="project" value="SynGO"/>
</dbReference>
<dbReference type="GO" id="GO:0004993">
    <property type="term" value="F:G protein-coupled serotonin receptor activity"/>
    <property type="evidence" value="ECO:0000314"/>
    <property type="project" value="UniProtKB"/>
</dbReference>
<dbReference type="GO" id="GO:0001586">
    <property type="term" value="F:Gi/o-coupled serotonin receptor activity"/>
    <property type="evidence" value="ECO:0007669"/>
    <property type="project" value="Ensembl"/>
</dbReference>
<dbReference type="GO" id="GO:0051378">
    <property type="term" value="F:serotonin binding"/>
    <property type="evidence" value="ECO:0000314"/>
    <property type="project" value="UniProtKB"/>
</dbReference>
<dbReference type="GO" id="GO:0099589">
    <property type="term" value="F:serotonin receptor activity"/>
    <property type="evidence" value="ECO:0007669"/>
    <property type="project" value="Ensembl"/>
</dbReference>
<dbReference type="GO" id="GO:0007198">
    <property type="term" value="P:adenylate cyclase-inhibiting serotonin receptor signaling pathway"/>
    <property type="evidence" value="ECO:0000250"/>
    <property type="project" value="UniProtKB"/>
</dbReference>
<dbReference type="GO" id="GO:0046849">
    <property type="term" value="P:bone remodeling"/>
    <property type="evidence" value="ECO:0000316"/>
    <property type="project" value="MGI"/>
</dbReference>
<dbReference type="GO" id="GO:0071312">
    <property type="term" value="P:cellular response to alkaloid"/>
    <property type="evidence" value="ECO:0000250"/>
    <property type="project" value="UniProtKB"/>
</dbReference>
<dbReference type="GO" id="GO:0071466">
    <property type="term" value="P:cellular response to xenobiotic stimulus"/>
    <property type="evidence" value="ECO:0000250"/>
    <property type="project" value="UniProtKB"/>
</dbReference>
<dbReference type="GO" id="GO:0007268">
    <property type="term" value="P:chemical synaptic transmission"/>
    <property type="evidence" value="ECO:0007669"/>
    <property type="project" value="InterPro"/>
</dbReference>
<dbReference type="GO" id="GO:0014063">
    <property type="term" value="P:negative regulation of serotonin secretion"/>
    <property type="evidence" value="ECO:0000315"/>
    <property type="project" value="UniProtKB"/>
</dbReference>
<dbReference type="GO" id="GO:0007208">
    <property type="term" value="P:phospholipase C-activating serotonin receptor signaling pathway"/>
    <property type="evidence" value="ECO:0000315"/>
    <property type="project" value="UniProtKB"/>
</dbReference>
<dbReference type="GO" id="GO:1904707">
    <property type="term" value="P:positive regulation of vascular associated smooth muscle cell proliferation"/>
    <property type="evidence" value="ECO:0007669"/>
    <property type="project" value="Ensembl"/>
</dbReference>
<dbReference type="GO" id="GO:0050795">
    <property type="term" value="P:regulation of behavior"/>
    <property type="evidence" value="ECO:0007669"/>
    <property type="project" value="InterPro"/>
</dbReference>
<dbReference type="GO" id="GO:0042310">
    <property type="term" value="P:vasoconstriction"/>
    <property type="evidence" value="ECO:0007669"/>
    <property type="project" value="InterPro"/>
</dbReference>
<dbReference type="CDD" id="cd15333">
    <property type="entry name" value="7tmA_5-HT1B_1D"/>
    <property type="match status" value="1"/>
</dbReference>
<dbReference type="Gene3D" id="1.20.1070.10">
    <property type="entry name" value="Rhodopsin 7-helix transmembrane proteins"/>
    <property type="match status" value="1"/>
</dbReference>
<dbReference type="InterPro" id="IPR002147">
    <property type="entry name" value="5HT1B_rcpt"/>
</dbReference>
<dbReference type="InterPro" id="IPR002231">
    <property type="entry name" value="5HT_rcpt"/>
</dbReference>
<dbReference type="InterPro" id="IPR000276">
    <property type="entry name" value="GPCR_Rhodpsn"/>
</dbReference>
<dbReference type="InterPro" id="IPR017452">
    <property type="entry name" value="GPCR_Rhodpsn_7TM"/>
</dbReference>
<dbReference type="PANTHER" id="PTHR24248:SF201">
    <property type="entry name" value="5-HYDROXYTRYPTAMINE RECEPTOR 1B"/>
    <property type="match status" value="1"/>
</dbReference>
<dbReference type="PANTHER" id="PTHR24248">
    <property type="entry name" value="ADRENERGIC RECEPTOR-RELATED G-PROTEIN COUPLED RECEPTOR"/>
    <property type="match status" value="1"/>
</dbReference>
<dbReference type="Pfam" id="PF00001">
    <property type="entry name" value="7tm_1"/>
    <property type="match status" value="1"/>
</dbReference>
<dbReference type="PRINTS" id="PR00513">
    <property type="entry name" value="5HT1BRECEPTR"/>
</dbReference>
<dbReference type="PRINTS" id="PR01101">
    <property type="entry name" value="5HTRECEPTOR"/>
</dbReference>
<dbReference type="PRINTS" id="PR00237">
    <property type="entry name" value="GPCRRHODOPSN"/>
</dbReference>
<dbReference type="SMART" id="SM01381">
    <property type="entry name" value="7TM_GPCR_Srsx"/>
    <property type="match status" value="1"/>
</dbReference>
<dbReference type="SUPFAM" id="SSF81321">
    <property type="entry name" value="Family A G protein-coupled receptor-like"/>
    <property type="match status" value="1"/>
</dbReference>
<dbReference type="PROSITE" id="PS00237">
    <property type="entry name" value="G_PROTEIN_RECEP_F1_1"/>
    <property type="match status" value="1"/>
</dbReference>
<dbReference type="PROSITE" id="PS50262">
    <property type="entry name" value="G_PROTEIN_RECEP_F1_2"/>
    <property type="match status" value="1"/>
</dbReference>
<protein>
    <recommendedName>
        <fullName>5-hydroxytryptamine receptor 1B</fullName>
        <shortName>5-HT-1B</shortName>
        <shortName>5-HT1B</shortName>
    </recommendedName>
    <alternativeName>
        <fullName>Serotonin receptor 1B</fullName>
    </alternativeName>
</protein>
<proteinExistence type="evidence at transcript level"/>
<name>5HT1B_MOUSE</name>
<comment type="function">
    <text evidence="1 6 7 8 9 10 11 12">G-protein coupled receptor for 5-hydroxytryptamine (serotonin) (PubMed:1557407, PubMed:17325130). Also functions as a receptor for ergot alkaloid derivatives, various anxiolytic and antidepressant drugs and other psychoactive substances, such as lysergic acid diethylamide (LSD) (By similarity). Ligand binding causes a conformation change that triggers signaling via guanine nucleotide-binding proteins (G proteins) and modulates the activity of downstream effectors, such as adenylate cyclase (PubMed:1557407, PubMed:17325130). HTR1B is coupled to G(i)/G(o) G alpha proteins and mediates inhibitory neurotransmission by inhibiting adenylate cyclase activity (By similarity). Arrestin family members inhibit signaling via G proteins and mediate activation of alternative signaling pathways (By similarity). Regulates the release of 5-hydroxytryptamine, dopamine and acetylcholine in the brain, and thereby affects neural activity, nociceptive processing, pain perception, mood and behavior (PubMed:10651141, PubMed:16750486, PubMed:8091214, PubMed:8742487, PubMed:9349547). Besides, plays a role in vasoconstriction of cerebral arteries (By similarity).</text>
</comment>
<comment type="subunit">
    <text evidence="1">Homodimer. Heterodimer with HTR1D.</text>
</comment>
<comment type="subcellular location">
    <subcellularLocation>
        <location evidence="7 9">Cell membrane</location>
        <topology evidence="3">Multi-pass membrane protein</topology>
    </subcellularLocation>
</comment>
<comment type="tissue specificity">
    <text evidence="7">Predominantly expressed in striatum and Purkinje cells.</text>
</comment>
<comment type="domain">
    <text evidence="1">Ligands are bound in a hydrophobic pocket formed by the transmembrane helices.</text>
</comment>
<comment type="domain">
    <text evidence="1">A residue in the 7th transmembrane region ('Thr-355' in human, Asn-351 in mouse and rat) is important for species-specific sensitivity to various agonists.</text>
</comment>
<comment type="PTM">
    <text evidence="1">Phosphorylated. Desensitization of the receptor may be mediated by its phosphorylation.</text>
</comment>
<comment type="PTM">
    <text evidence="1">Palmitoylated.</text>
</comment>
<comment type="disruption phenotype">
    <text evidence="6 8 10 11 12">Mutant male mice display increased aggressivity towards intruders. Treatment with a Htr1b agonist does not trigger increased locomotor behavior in mutant mice, contrary to what is observed with wild-type mice. Treatment with a Htr1b agonist does not inhibit 5-hydroxytryptamine release in the frontal cortex and hippocampus of mutant mice, contrary to what is observed with wild-type mice. Likewise, Htr1b agonists do not inhibit dopamine and acetylcholine release in brains from mutant mice.</text>
</comment>
<comment type="similarity">
    <text evidence="4">Belongs to the G-protein coupled receptor 1 family.</text>
</comment>
<feature type="chain" id="PRO_0000068917" description="5-hydroxytryptamine receptor 1B">
    <location>
        <begin position="1"/>
        <end position="386"/>
    </location>
</feature>
<feature type="topological domain" description="Extracellular" evidence="1">
    <location>
        <begin position="1"/>
        <end position="42"/>
    </location>
</feature>
<feature type="transmembrane region" description="Helical; Name=1" evidence="1">
    <location>
        <begin position="43"/>
        <end position="68"/>
    </location>
</feature>
<feature type="topological domain" description="Cytoplasmic" evidence="1">
    <location>
        <begin position="69"/>
        <end position="82"/>
    </location>
</feature>
<feature type="transmembrane region" description="Helical; Name=2" evidence="1">
    <location>
        <begin position="83"/>
        <end position="107"/>
    </location>
</feature>
<feature type="topological domain" description="Extracellular" evidence="1">
    <location>
        <begin position="108"/>
        <end position="115"/>
    </location>
</feature>
<feature type="transmembrane region" description="Helical; Name=3" evidence="1">
    <location>
        <begin position="116"/>
        <end position="141"/>
    </location>
</feature>
<feature type="topological domain" description="Cytoplasmic" evidence="1">
    <location>
        <begin position="142"/>
        <end position="161"/>
    </location>
</feature>
<feature type="transmembrane region" description="Helical; Name=4" evidence="1">
    <location>
        <begin position="162"/>
        <end position="180"/>
    </location>
</feature>
<feature type="topological domain" description="Extracellular" evidence="1">
    <location>
        <begin position="181"/>
        <end position="201"/>
    </location>
</feature>
<feature type="transmembrane region" description="Helical; Name=5" evidence="1">
    <location>
        <begin position="202"/>
        <end position="225"/>
    </location>
</feature>
<feature type="topological domain" description="Cytoplasmic" evidence="1">
    <location>
        <begin position="226"/>
        <end position="311"/>
    </location>
</feature>
<feature type="transmembrane region" description="Helical; Name=6" evidence="1">
    <location>
        <begin position="312"/>
        <end position="333"/>
    </location>
</feature>
<feature type="topological domain" description="Extracellular" evidence="1">
    <location>
        <begin position="334"/>
        <end position="343"/>
    </location>
</feature>
<feature type="transmembrane region" description="Helical; Name=7" evidence="1">
    <location>
        <begin position="344"/>
        <end position="366"/>
    </location>
</feature>
<feature type="topological domain" description="Cytoplasmic" evidence="1">
    <location>
        <begin position="367"/>
        <end position="386"/>
    </location>
</feature>
<feature type="region of interest" description="Disordered" evidence="5">
    <location>
        <begin position="255"/>
        <end position="278"/>
    </location>
</feature>
<feature type="short sequence motif" description="DRY motif; important for ligand-induced conformation changes and signaling" evidence="2">
    <location>
        <begin position="142"/>
        <end position="144"/>
    </location>
</feature>
<feature type="short sequence motif" description="NPxxY motif; important for ligand-induced conformation changes and signaling" evidence="2">
    <location>
        <begin position="361"/>
        <end position="365"/>
    </location>
</feature>
<feature type="compositionally biased region" description="Polar residues" evidence="5">
    <location>
        <begin position="255"/>
        <end position="268"/>
    </location>
</feature>
<feature type="binding site" evidence="1">
    <location>
        <position position="125"/>
    </location>
    <ligand>
        <name>ergotamine</name>
        <dbReference type="ChEBI" id="CHEBI:190463"/>
        <note>agonist</note>
    </ligand>
</feature>
<feature type="binding site" evidence="1">
    <location>
        <position position="130"/>
    </location>
    <ligand>
        <name>ergotamine</name>
        <dbReference type="ChEBI" id="CHEBI:190463"/>
        <note>agonist</note>
    </ligand>
</feature>
<feature type="binding site" evidence="1">
    <location>
        <position position="197"/>
    </location>
    <ligand>
        <name>ergotamine</name>
        <dbReference type="ChEBI" id="CHEBI:190463"/>
        <note>agonist</note>
    </ligand>
</feature>
<feature type="site" description="Important for species-specific agonist sensitivity" evidence="1">
    <location>
        <position position="351"/>
    </location>
</feature>
<feature type="lipid moiety-binding region" description="S-palmitoyl cysteine" evidence="3">
    <location>
        <position position="384"/>
    </location>
</feature>
<feature type="glycosylation site" description="N-linked (GlcNAc...) asparagine" evidence="3">
    <location>
        <position position="24"/>
    </location>
</feature>
<feature type="glycosylation site" description="N-linked (GlcNAc...) asparagine" evidence="3">
    <location>
        <position position="28"/>
    </location>
</feature>
<feature type="disulfide bond" evidence="4">
    <location>
        <begin position="118"/>
        <end position="195"/>
    </location>
</feature>
<accession>P28334</accession>
<keyword id="KW-0085">Behavior</keyword>
<keyword id="KW-1003">Cell membrane</keyword>
<keyword id="KW-1015">Disulfide bond</keyword>
<keyword id="KW-0297">G-protein coupled receptor</keyword>
<keyword id="KW-0325">Glycoprotein</keyword>
<keyword id="KW-0449">Lipoprotein</keyword>
<keyword id="KW-0472">Membrane</keyword>
<keyword id="KW-0564">Palmitate</keyword>
<keyword id="KW-0597">Phosphoprotein</keyword>
<keyword id="KW-0675">Receptor</keyword>
<keyword id="KW-1185">Reference proteome</keyword>
<keyword id="KW-0807">Transducer</keyword>
<keyword id="KW-0812">Transmembrane</keyword>
<keyword id="KW-1133">Transmembrane helix</keyword>
<organism>
    <name type="scientific">Mus musculus</name>
    <name type="common">Mouse</name>
    <dbReference type="NCBI Taxonomy" id="10090"/>
    <lineage>
        <taxon>Eukaryota</taxon>
        <taxon>Metazoa</taxon>
        <taxon>Chordata</taxon>
        <taxon>Craniata</taxon>
        <taxon>Vertebrata</taxon>
        <taxon>Euteleostomi</taxon>
        <taxon>Mammalia</taxon>
        <taxon>Eutheria</taxon>
        <taxon>Euarchontoglires</taxon>
        <taxon>Glires</taxon>
        <taxon>Rodentia</taxon>
        <taxon>Myomorpha</taxon>
        <taxon>Muroidea</taxon>
        <taxon>Muridae</taxon>
        <taxon>Murinae</taxon>
        <taxon>Mus</taxon>
        <taxon>Mus</taxon>
    </lineage>
</organism>
<evidence type="ECO:0000250" key="1">
    <source>
        <dbReference type="UniProtKB" id="P28222"/>
    </source>
</evidence>
<evidence type="ECO:0000250" key="2">
    <source>
        <dbReference type="UniProtKB" id="P41595"/>
    </source>
</evidence>
<evidence type="ECO:0000255" key="3"/>
<evidence type="ECO:0000255" key="4">
    <source>
        <dbReference type="PROSITE-ProRule" id="PRU00521"/>
    </source>
</evidence>
<evidence type="ECO:0000256" key="5">
    <source>
        <dbReference type="SAM" id="MobiDB-lite"/>
    </source>
</evidence>
<evidence type="ECO:0000269" key="6">
    <source>
    </source>
</evidence>
<evidence type="ECO:0000269" key="7">
    <source>
    </source>
</evidence>
<evidence type="ECO:0000269" key="8">
    <source>
    </source>
</evidence>
<evidence type="ECO:0000269" key="9">
    <source>
    </source>
</evidence>
<evidence type="ECO:0000269" key="10">
    <source>
    </source>
</evidence>
<evidence type="ECO:0000269" key="11">
    <source>
    </source>
</evidence>
<evidence type="ECO:0000269" key="12">
    <source>
    </source>
</evidence>
<reference key="1">
    <citation type="journal article" date="1992" name="Proc. Natl. Acad. Sci. U.S.A.">
        <title>Mouse 5HT1B serotonin receptor: cloning, functional expression, and localization in motor control centers.</title>
        <authorList>
            <person name="Maroteaux L."/>
            <person name="Saudou F."/>
            <person name="Amlaiky N."/>
            <person name="Boschert U."/>
            <person name="Plassat J.-L."/>
            <person name="Hen R."/>
        </authorList>
    </citation>
    <scope>NUCLEOTIDE SEQUENCE [GENOMIC DNA]</scope>
    <scope>FUNCTION</scope>
    <scope>SUBCELLULAR LOCATION</scope>
    <scope>TISSUE SPECIFICITY</scope>
</reference>
<reference key="2">
    <citation type="journal article" date="1994" name="Science">
        <title>Enhanced aggressive behavior in mice lacking 5-HT1B receptor.</title>
        <authorList>
            <person name="Saudou F."/>
            <person name="Amara D.A."/>
            <person name="Dierich A."/>
            <person name="LeMeur M."/>
            <person name="Ramboz S."/>
            <person name="Segu L."/>
            <person name="Buhot M.C."/>
            <person name="Hen R."/>
        </authorList>
    </citation>
    <scope>DISRUPTION PHENOTYPE</scope>
    <scope>FUNCTION</scope>
</reference>
<reference key="3">
    <citation type="journal article" date="1995" name="NeuroReport">
        <title>Regulation of [3H]5-HT release in raphe, frontal cortex and hippocampus of 5-HT1B knock-out mice.</title>
        <authorList>
            <person name="Pineyro G."/>
            <person name="Castanon N."/>
            <person name="Hen R."/>
            <person name="Blier P."/>
        </authorList>
    </citation>
    <scope>DISRUPTION PHENOTYPE</scope>
    <scope>FUNCTION</scope>
</reference>
<reference key="4">
    <citation type="journal article" date="1997" name="J. Neurochem.">
        <title>Regulation of serotonin release in the frontal cortex and ventral hippocampus of homozygous mice lacking 5-HT1B receptors: in vivo microdialysis studies.</title>
        <authorList>
            <person name="Trillat A.C."/>
            <person name="Malagie I."/>
            <person name="Scearce K."/>
            <person name="Pons D."/>
            <person name="Anmella M.C."/>
            <person name="Jacquot C."/>
            <person name="Hen R."/>
            <person name="Gardier A.M."/>
        </authorList>
    </citation>
    <scope>DISRUPTION PHENOTYPE</scope>
    <scope>FUNCTION</scope>
</reference>
<reference key="5">
    <citation type="journal article" date="2000" name="Naunyn Schmiedebergs Arch. Pharmacol.">
        <title>5-HT1B receptors modulate release of [3H]dopamine from rat striatal synaptosomes: further evidence using 5-HT moduline, polyclonal 5-HT1B receptor antibodies and 5-HT1B receptor knock-out mice.</title>
        <authorList>
            <person name="Sarhan H."/>
            <person name="Grimaldi B."/>
            <person name="Hen R."/>
            <person name="Fillion G."/>
        </authorList>
    </citation>
    <scope>DISRUPTION PHENOTYPE</scope>
    <scope>FUNCTION</scope>
</reference>
<reference key="6">
    <citation type="journal article" date="2006" name="Brain Res. Bull.">
        <title>Presynaptic serotonergic modulation of 5-HT and acetylcholine release in the hippocampus and the cortex of 5-HT1B-receptor knockout mice.</title>
        <authorList>
            <person name="Rutz S."/>
            <person name="Riegert C."/>
            <person name="Rothmaier A.K."/>
            <person name="Buhot M.C."/>
            <person name="Cassel J.C."/>
            <person name="Jackisch R."/>
        </authorList>
    </citation>
    <scope>DISRUPTION PHENOTYPE</scope>
    <scope>FUNCTION</scope>
</reference>
<reference key="7">
    <citation type="journal article" date="2007" name="Mol. Pharmacol.">
        <title>Modified receptor internalization upon coexpression of 5-HT1B receptor and 5-HT2B receptors.</title>
        <authorList>
            <person name="Janoshazi A."/>
            <person name="Deraet M."/>
            <person name="Callebert J."/>
            <person name="Setola V."/>
            <person name="Guenther S."/>
            <person name="Saubamea B."/>
            <person name="Manivet P."/>
            <person name="Launay J.M."/>
            <person name="Maroteaux L."/>
        </authorList>
    </citation>
    <scope>FUNCTION</scope>
    <scope>SUBCELLULAR LOCATION</scope>
</reference>